<gene>
    <name type="primary">nat8l</name>
</gene>
<name>NAT8L_XENTR</name>
<protein>
    <recommendedName>
        <fullName>N-acetylaspartate synthetase</fullName>
        <shortName>NAA synthetase</shortName>
        <ecNumber evidence="3">2.3.1.17</ecNumber>
    </recommendedName>
    <alternativeName>
        <fullName>N-acetyltransferase 8-like protein</fullName>
    </alternativeName>
</protein>
<organism>
    <name type="scientific">Xenopus tropicalis</name>
    <name type="common">Western clawed frog</name>
    <name type="synonym">Silurana tropicalis</name>
    <dbReference type="NCBI Taxonomy" id="8364"/>
    <lineage>
        <taxon>Eukaryota</taxon>
        <taxon>Metazoa</taxon>
        <taxon>Chordata</taxon>
        <taxon>Craniata</taxon>
        <taxon>Vertebrata</taxon>
        <taxon>Euteleostomi</taxon>
        <taxon>Amphibia</taxon>
        <taxon>Batrachia</taxon>
        <taxon>Anura</taxon>
        <taxon>Pipoidea</taxon>
        <taxon>Pipidae</taxon>
        <taxon>Xenopodinae</taxon>
        <taxon>Xenopus</taxon>
        <taxon>Silurana</taxon>
    </lineage>
</organism>
<comment type="function">
    <text evidence="3">Catalyzes the synthesis of N-acetylaspartate acid (NAA) from L-aspartate and acetyl-CoA.</text>
</comment>
<comment type="catalytic activity">
    <reaction evidence="3">
        <text>L-aspartate + acetyl-CoA = N-acetyl-L-aspartate + CoA + H(+)</text>
        <dbReference type="Rhea" id="RHEA:14165"/>
        <dbReference type="ChEBI" id="CHEBI:15378"/>
        <dbReference type="ChEBI" id="CHEBI:16953"/>
        <dbReference type="ChEBI" id="CHEBI:29991"/>
        <dbReference type="ChEBI" id="CHEBI:57287"/>
        <dbReference type="ChEBI" id="CHEBI:57288"/>
        <dbReference type="EC" id="2.3.1.17"/>
    </reaction>
    <physiologicalReaction direction="left-to-right" evidence="3">
        <dbReference type="Rhea" id="RHEA:14166"/>
    </physiologicalReaction>
</comment>
<comment type="subcellular location">
    <subcellularLocation>
        <location evidence="3">Cytoplasm</location>
    </subcellularLocation>
    <subcellularLocation>
        <location evidence="1">Microsome membrane</location>
        <topology evidence="4">Single-pass membrane protein</topology>
    </subcellularLocation>
    <subcellularLocation>
        <location evidence="3">Mitochondrion membrane</location>
        <topology evidence="4">Single-pass membrane protein</topology>
    </subcellularLocation>
    <subcellularLocation>
        <location evidence="2">Endoplasmic reticulum membrane</location>
        <topology evidence="4">Single-pass membrane protein</topology>
    </subcellularLocation>
</comment>
<comment type="similarity">
    <text evidence="7">Belongs to the NAT8 family.</text>
</comment>
<evidence type="ECO:0000250" key="1">
    <source>
        <dbReference type="UniProtKB" id="D3ZVU9"/>
    </source>
</evidence>
<evidence type="ECO:0000250" key="2">
    <source>
        <dbReference type="UniProtKB" id="Q3UGX3"/>
    </source>
</evidence>
<evidence type="ECO:0000250" key="3">
    <source>
        <dbReference type="UniProtKB" id="Q8N9F0"/>
    </source>
</evidence>
<evidence type="ECO:0000255" key="4"/>
<evidence type="ECO:0000255" key="5">
    <source>
        <dbReference type="PROSITE-ProRule" id="PRU00532"/>
    </source>
</evidence>
<evidence type="ECO:0000256" key="6">
    <source>
        <dbReference type="SAM" id="MobiDB-lite"/>
    </source>
</evidence>
<evidence type="ECO:0000305" key="7"/>
<keyword id="KW-0012">Acyltransferase</keyword>
<keyword id="KW-0963">Cytoplasm</keyword>
<keyword id="KW-0256">Endoplasmic reticulum</keyword>
<keyword id="KW-0472">Membrane</keyword>
<keyword id="KW-0492">Microsome</keyword>
<keyword id="KW-0496">Mitochondrion</keyword>
<keyword id="KW-1185">Reference proteome</keyword>
<keyword id="KW-0808">Transferase</keyword>
<keyword id="KW-0812">Transmembrane</keyword>
<keyword id="KW-1133">Transmembrane helix</keyword>
<proteinExistence type="evidence at transcript level"/>
<dbReference type="EC" id="2.3.1.17" evidence="3"/>
<dbReference type="EMBL" id="BC135824">
    <property type="protein sequence ID" value="AAI35825.1"/>
    <property type="molecule type" value="mRNA"/>
</dbReference>
<dbReference type="RefSeq" id="NP_001096350.1">
    <property type="nucleotide sequence ID" value="NM_001102880.1"/>
</dbReference>
<dbReference type="SMR" id="A4II32"/>
<dbReference type="FunCoup" id="A4II32">
    <property type="interactions" value="465"/>
</dbReference>
<dbReference type="STRING" id="8364.ENSXETP00000014819"/>
<dbReference type="PaxDb" id="8364-ENSXETP00000052747"/>
<dbReference type="DNASU" id="100124940"/>
<dbReference type="GeneID" id="100124940"/>
<dbReference type="KEGG" id="xtr:100124940"/>
<dbReference type="AGR" id="Xenbase:XB-GENE-5817008"/>
<dbReference type="CTD" id="339983"/>
<dbReference type="Xenbase" id="XB-GENE-5817008">
    <property type="gene designation" value="nat8l"/>
</dbReference>
<dbReference type="eggNOG" id="KOG3139">
    <property type="taxonomic scope" value="Eukaryota"/>
</dbReference>
<dbReference type="InParanoid" id="A4II32"/>
<dbReference type="OMA" id="FHEGIME"/>
<dbReference type="OrthoDB" id="41532at2759"/>
<dbReference type="Reactome" id="R-XTR-8963693">
    <property type="pathway name" value="Aspartate and asparagine metabolism"/>
</dbReference>
<dbReference type="Proteomes" id="UP000008143">
    <property type="component" value="Chromosome 1"/>
</dbReference>
<dbReference type="GO" id="GO:0005789">
    <property type="term" value="C:endoplasmic reticulum membrane"/>
    <property type="evidence" value="ECO:0007669"/>
    <property type="project" value="UniProtKB-SubCell"/>
</dbReference>
<dbReference type="GO" id="GO:0043231">
    <property type="term" value="C:intracellular membrane-bounded organelle"/>
    <property type="evidence" value="ECO:0000250"/>
    <property type="project" value="UniProtKB"/>
</dbReference>
<dbReference type="GO" id="GO:0031966">
    <property type="term" value="C:mitochondrial membrane"/>
    <property type="evidence" value="ECO:0007669"/>
    <property type="project" value="UniProtKB-SubCell"/>
</dbReference>
<dbReference type="GO" id="GO:0005739">
    <property type="term" value="C:mitochondrion"/>
    <property type="evidence" value="ECO:0000250"/>
    <property type="project" value="UniProtKB"/>
</dbReference>
<dbReference type="GO" id="GO:0017188">
    <property type="term" value="F:L-aspartate N-acetyltransferase activity"/>
    <property type="evidence" value="ECO:0000250"/>
    <property type="project" value="UniProtKB"/>
</dbReference>
<dbReference type="CDD" id="cd04301">
    <property type="entry name" value="NAT_SF"/>
    <property type="match status" value="1"/>
</dbReference>
<dbReference type="Gene3D" id="3.40.630.30">
    <property type="match status" value="1"/>
</dbReference>
<dbReference type="InterPro" id="IPR016181">
    <property type="entry name" value="Acyl_CoA_acyltransferase"/>
</dbReference>
<dbReference type="InterPro" id="IPR000182">
    <property type="entry name" value="GNAT_dom"/>
</dbReference>
<dbReference type="InterPro" id="IPR050769">
    <property type="entry name" value="NAT_camello-type"/>
</dbReference>
<dbReference type="PANTHER" id="PTHR13947">
    <property type="entry name" value="GNAT FAMILY N-ACETYLTRANSFERASE"/>
    <property type="match status" value="1"/>
</dbReference>
<dbReference type="PANTHER" id="PTHR13947:SF11">
    <property type="entry name" value="N-ACETYLASPARTATE SYNTHETASE"/>
    <property type="match status" value="1"/>
</dbReference>
<dbReference type="Pfam" id="PF00583">
    <property type="entry name" value="Acetyltransf_1"/>
    <property type="match status" value="1"/>
</dbReference>
<dbReference type="SUPFAM" id="SSF55729">
    <property type="entry name" value="Acyl-CoA N-acyltransferases (Nat)"/>
    <property type="match status" value="1"/>
</dbReference>
<dbReference type="PROSITE" id="PS51186">
    <property type="entry name" value="GNAT"/>
    <property type="match status" value="1"/>
</dbReference>
<feature type="chain" id="PRO_0000305232" description="N-acetylaspartate synthetase">
    <location>
        <begin position="1"/>
        <end position="271"/>
    </location>
</feature>
<feature type="transmembrane region" description="Helical" evidence="4">
    <location>
        <begin position="89"/>
        <end position="109"/>
    </location>
</feature>
<feature type="domain" description="N-acetyltransferase" evidence="5">
    <location>
        <begin position="115"/>
        <end position="258"/>
    </location>
</feature>
<feature type="region of interest" description="Disordered" evidence="6">
    <location>
        <begin position="1"/>
        <end position="38"/>
    </location>
</feature>
<feature type="compositionally biased region" description="Pro residues" evidence="6">
    <location>
        <begin position="12"/>
        <end position="24"/>
    </location>
</feature>
<feature type="compositionally biased region" description="Low complexity" evidence="6">
    <location>
        <begin position="25"/>
        <end position="37"/>
    </location>
</feature>
<accession>A4II32</accession>
<sequence>MTYRGTRKSPCCSPPPRCGPPLPSGPAGSALGPPSSGAEEEMTKEQVYLREFQPADQEFARRIFYEGIKERILSSAFRGLKYQPLLQSVYAVIIIMCFVVTKSLLVTCCMPLFLLGMRYYYSRKIILNHLECALRTDMSDIEQYYMKQPGSCFWVAVLEGKVVGIVAARGNEEDNVVELRRMSVDSNYRGKGIAKALGRKVLEFAMLNHYSSIVLGTTAVKIAAHKLYESLGFKHVGVVEHHIVPGMTHSLLERLFFQLRYHRYCLQLREE</sequence>
<reference key="1">
    <citation type="submission" date="2007-03" db="EMBL/GenBank/DDBJ databases">
        <authorList>
            <consortium name="NIH - Xenopus Gene Collection (XGC) project"/>
        </authorList>
    </citation>
    <scope>NUCLEOTIDE SEQUENCE [LARGE SCALE MRNA]</scope>
    <source>
        <tissue>Embryo</tissue>
    </source>
</reference>